<dbReference type="EMBL" id="L77117">
    <property type="protein sequence ID" value="AAB98512.1"/>
    <property type="molecule type" value="Genomic_DNA"/>
</dbReference>
<dbReference type="PIR" id="A64364">
    <property type="entry name" value="A64364"/>
</dbReference>
<dbReference type="STRING" id="243232.MJ_0513"/>
<dbReference type="PaxDb" id="243232-MJ_0513"/>
<dbReference type="EnsemblBacteria" id="AAB98512">
    <property type="protein sequence ID" value="AAB98512"/>
    <property type="gene ID" value="MJ_0513"/>
</dbReference>
<dbReference type="KEGG" id="mja:MJ_0513"/>
<dbReference type="eggNOG" id="arCOG08281">
    <property type="taxonomic scope" value="Archaea"/>
</dbReference>
<dbReference type="HOGENOM" id="CLU_1173375_0_0_2"/>
<dbReference type="InParanoid" id="Q57933"/>
<dbReference type="Proteomes" id="UP000000805">
    <property type="component" value="Chromosome"/>
</dbReference>
<accession>Q57933</accession>
<gene>
    <name type="ordered locus">MJ0513</name>
</gene>
<proteinExistence type="predicted"/>
<reference key="1">
    <citation type="journal article" date="1996" name="Science">
        <title>Complete genome sequence of the methanogenic archaeon, Methanococcus jannaschii.</title>
        <authorList>
            <person name="Bult C.J."/>
            <person name="White O."/>
            <person name="Olsen G.J."/>
            <person name="Zhou L."/>
            <person name="Fleischmann R.D."/>
            <person name="Sutton G.G."/>
            <person name="Blake J.A."/>
            <person name="FitzGerald L.M."/>
            <person name="Clayton R.A."/>
            <person name="Gocayne J.D."/>
            <person name="Kerlavage A.R."/>
            <person name="Dougherty B.A."/>
            <person name="Tomb J.-F."/>
            <person name="Adams M.D."/>
            <person name="Reich C.I."/>
            <person name="Overbeek R."/>
            <person name="Kirkness E.F."/>
            <person name="Weinstock K.G."/>
            <person name="Merrick J.M."/>
            <person name="Glodek A."/>
            <person name="Scott J.L."/>
            <person name="Geoghagen N.S.M."/>
            <person name="Weidman J.F."/>
            <person name="Fuhrmann J.L."/>
            <person name="Nguyen D."/>
            <person name="Utterback T.R."/>
            <person name="Kelley J.M."/>
            <person name="Peterson J.D."/>
            <person name="Sadow P.W."/>
            <person name="Hanna M.C."/>
            <person name="Cotton M.D."/>
            <person name="Roberts K.M."/>
            <person name="Hurst M.A."/>
            <person name="Kaine B.P."/>
            <person name="Borodovsky M."/>
            <person name="Klenk H.-P."/>
            <person name="Fraser C.M."/>
            <person name="Smith H.O."/>
            <person name="Woese C.R."/>
            <person name="Venter J.C."/>
        </authorList>
    </citation>
    <scope>NUCLEOTIDE SEQUENCE [LARGE SCALE GENOMIC DNA]</scope>
    <source>
        <strain>ATCC 43067 / DSM 2661 / JAL-1 / JCM 10045 / NBRC 100440</strain>
    </source>
</reference>
<protein>
    <recommendedName>
        <fullName>Uncharacterized protein MJ0513</fullName>
    </recommendedName>
</protein>
<organism>
    <name type="scientific">Methanocaldococcus jannaschii (strain ATCC 43067 / DSM 2661 / JAL-1 / JCM 10045 / NBRC 100440)</name>
    <name type="common">Methanococcus jannaschii</name>
    <dbReference type="NCBI Taxonomy" id="243232"/>
    <lineage>
        <taxon>Archaea</taxon>
        <taxon>Methanobacteriati</taxon>
        <taxon>Methanobacteriota</taxon>
        <taxon>Methanomada group</taxon>
        <taxon>Methanococci</taxon>
        <taxon>Methanococcales</taxon>
        <taxon>Methanocaldococcaceae</taxon>
        <taxon>Methanocaldococcus</taxon>
    </lineage>
</organism>
<feature type="chain" id="PRO_0000106906" description="Uncharacterized protein MJ0513">
    <location>
        <begin position="1"/>
        <end position="241"/>
    </location>
</feature>
<keyword id="KW-1185">Reference proteome</keyword>
<sequence>MMIMVKYGIKIEDDRVEIVRYSTVYTDEGVEELEEIYLQIKADDYESILGIYEPYPKKDVRFVGNLDDLKVVKGQEMRTAVPIPLSLCRAKYLKRIDEDDERITYLDINGVPIQRGIIVGIVVGVQHKRTSTGKDYTIFRIFDGYGWGRLRLFGIKANPEIFTGMFIRGFVRFGAVEFRTEEGELRKAISLTLNDIPVIVQPKEYIVHKKFIDEVVLPRVAPELIEEDKEEEETDEETINS</sequence>
<name>Y513_METJA</name>